<feature type="chain" id="PRO_1000091361" description="Leucine--tRNA ligase">
    <location>
        <begin position="1"/>
        <end position="860"/>
    </location>
</feature>
<feature type="short sequence motif" description="'HIGH' region">
    <location>
        <begin position="42"/>
        <end position="52"/>
    </location>
</feature>
<feature type="short sequence motif" description="'KMSKS' region">
    <location>
        <begin position="619"/>
        <end position="623"/>
    </location>
</feature>
<feature type="binding site" evidence="1">
    <location>
        <position position="622"/>
    </location>
    <ligand>
        <name>ATP</name>
        <dbReference type="ChEBI" id="CHEBI:30616"/>
    </ligand>
</feature>
<gene>
    <name evidence="1" type="primary">leuS</name>
    <name type="ordered locus">SeSA_A0808</name>
</gene>
<keyword id="KW-0030">Aminoacyl-tRNA synthetase</keyword>
<keyword id="KW-0067">ATP-binding</keyword>
<keyword id="KW-0963">Cytoplasm</keyword>
<keyword id="KW-0436">Ligase</keyword>
<keyword id="KW-0547">Nucleotide-binding</keyword>
<keyword id="KW-0648">Protein biosynthesis</keyword>
<proteinExistence type="inferred from homology"/>
<comment type="catalytic activity">
    <reaction evidence="1">
        <text>tRNA(Leu) + L-leucine + ATP = L-leucyl-tRNA(Leu) + AMP + diphosphate</text>
        <dbReference type="Rhea" id="RHEA:11688"/>
        <dbReference type="Rhea" id="RHEA-COMP:9613"/>
        <dbReference type="Rhea" id="RHEA-COMP:9622"/>
        <dbReference type="ChEBI" id="CHEBI:30616"/>
        <dbReference type="ChEBI" id="CHEBI:33019"/>
        <dbReference type="ChEBI" id="CHEBI:57427"/>
        <dbReference type="ChEBI" id="CHEBI:78442"/>
        <dbReference type="ChEBI" id="CHEBI:78494"/>
        <dbReference type="ChEBI" id="CHEBI:456215"/>
        <dbReference type="EC" id="6.1.1.4"/>
    </reaction>
</comment>
<comment type="subcellular location">
    <subcellularLocation>
        <location evidence="1">Cytoplasm</location>
    </subcellularLocation>
</comment>
<comment type="similarity">
    <text evidence="1">Belongs to the class-I aminoacyl-tRNA synthetase family.</text>
</comment>
<name>SYL_SALSV</name>
<protein>
    <recommendedName>
        <fullName evidence="1">Leucine--tRNA ligase</fullName>
        <ecNumber evidence="1">6.1.1.4</ecNumber>
    </recommendedName>
    <alternativeName>
        <fullName evidence="1">Leucyl-tRNA synthetase</fullName>
        <shortName evidence="1">LeuRS</shortName>
    </alternativeName>
</protein>
<dbReference type="EC" id="6.1.1.4" evidence="1"/>
<dbReference type="EMBL" id="CP001127">
    <property type="protein sequence ID" value="ACF89879.1"/>
    <property type="molecule type" value="Genomic_DNA"/>
</dbReference>
<dbReference type="RefSeq" id="WP_001157919.1">
    <property type="nucleotide sequence ID" value="NC_011094.1"/>
</dbReference>
<dbReference type="SMR" id="B4TPX5"/>
<dbReference type="KEGG" id="sew:SeSA_A0808"/>
<dbReference type="HOGENOM" id="CLU_004427_0_0_6"/>
<dbReference type="Proteomes" id="UP000001865">
    <property type="component" value="Chromosome"/>
</dbReference>
<dbReference type="GO" id="GO:0005829">
    <property type="term" value="C:cytosol"/>
    <property type="evidence" value="ECO:0007669"/>
    <property type="project" value="TreeGrafter"/>
</dbReference>
<dbReference type="GO" id="GO:0002161">
    <property type="term" value="F:aminoacyl-tRNA deacylase activity"/>
    <property type="evidence" value="ECO:0007669"/>
    <property type="project" value="InterPro"/>
</dbReference>
<dbReference type="GO" id="GO:0005524">
    <property type="term" value="F:ATP binding"/>
    <property type="evidence" value="ECO:0007669"/>
    <property type="project" value="UniProtKB-UniRule"/>
</dbReference>
<dbReference type="GO" id="GO:0004823">
    <property type="term" value="F:leucine-tRNA ligase activity"/>
    <property type="evidence" value="ECO:0007669"/>
    <property type="project" value="UniProtKB-UniRule"/>
</dbReference>
<dbReference type="GO" id="GO:0006429">
    <property type="term" value="P:leucyl-tRNA aminoacylation"/>
    <property type="evidence" value="ECO:0007669"/>
    <property type="project" value="UniProtKB-UniRule"/>
</dbReference>
<dbReference type="CDD" id="cd07958">
    <property type="entry name" value="Anticodon_Ia_Leu_BEm"/>
    <property type="match status" value="1"/>
</dbReference>
<dbReference type="CDD" id="cd00812">
    <property type="entry name" value="LeuRS_core"/>
    <property type="match status" value="1"/>
</dbReference>
<dbReference type="FunFam" id="1.10.730.10:FF:000002">
    <property type="entry name" value="Leucine--tRNA ligase"/>
    <property type="match status" value="2"/>
</dbReference>
<dbReference type="FunFam" id="2.20.28.290:FF:000001">
    <property type="entry name" value="Leucine--tRNA ligase"/>
    <property type="match status" value="1"/>
</dbReference>
<dbReference type="FunFam" id="3.10.20.590:FF:000001">
    <property type="entry name" value="Leucine--tRNA ligase"/>
    <property type="match status" value="1"/>
</dbReference>
<dbReference type="FunFam" id="3.40.50.620:FF:000003">
    <property type="entry name" value="Leucine--tRNA ligase"/>
    <property type="match status" value="1"/>
</dbReference>
<dbReference type="FunFam" id="3.40.50.620:FF:000124">
    <property type="entry name" value="Leucine--tRNA ligase"/>
    <property type="match status" value="1"/>
</dbReference>
<dbReference type="Gene3D" id="2.20.28.290">
    <property type="match status" value="1"/>
</dbReference>
<dbReference type="Gene3D" id="3.10.20.590">
    <property type="match status" value="1"/>
</dbReference>
<dbReference type="Gene3D" id="3.40.50.620">
    <property type="entry name" value="HUPs"/>
    <property type="match status" value="1"/>
</dbReference>
<dbReference type="Gene3D" id="1.10.730.10">
    <property type="entry name" value="Isoleucyl-tRNA Synthetase, Domain 1"/>
    <property type="match status" value="1"/>
</dbReference>
<dbReference type="Gene3D" id="3.90.740.10">
    <property type="entry name" value="Valyl/Leucyl/Isoleucyl-tRNA synthetase, editing domain"/>
    <property type="match status" value="1"/>
</dbReference>
<dbReference type="HAMAP" id="MF_00049_B">
    <property type="entry name" value="Leu_tRNA_synth_B"/>
    <property type="match status" value="1"/>
</dbReference>
<dbReference type="InterPro" id="IPR001412">
    <property type="entry name" value="aa-tRNA-synth_I_CS"/>
</dbReference>
<dbReference type="InterPro" id="IPR002300">
    <property type="entry name" value="aa-tRNA-synth_Ia"/>
</dbReference>
<dbReference type="InterPro" id="IPR002302">
    <property type="entry name" value="Leu-tRNA-ligase"/>
</dbReference>
<dbReference type="InterPro" id="IPR025709">
    <property type="entry name" value="Leu_tRNA-synth_edit"/>
</dbReference>
<dbReference type="InterPro" id="IPR013155">
    <property type="entry name" value="M/V/L/I-tRNA-synth_anticd-bd"/>
</dbReference>
<dbReference type="InterPro" id="IPR015413">
    <property type="entry name" value="Methionyl/Leucyl_tRNA_Synth"/>
</dbReference>
<dbReference type="InterPro" id="IPR014729">
    <property type="entry name" value="Rossmann-like_a/b/a_fold"/>
</dbReference>
<dbReference type="InterPro" id="IPR009080">
    <property type="entry name" value="tRNAsynth_Ia_anticodon-bd"/>
</dbReference>
<dbReference type="InterPro" id="IPR009008">
    <property type="entry name" value="Val/Leu/Ile-tRNA-synth_edit"/>
</dbReference>
<dbReference type="NCBIfam" id="TIGR00396">
    <property type="entry name" value="leuS_bact"/>
    <property type="match status" value="1"/>
</dbReference>
<dbReference type="PANTHER" id="PTHR43740:SF2">
    <property type="entry name" value="LEUCINE--TRNA LIGASE, MITOCHONDRIAL"/>
    <property type="match status" value="1"/>
</dbReference>
<dbReference type="PANTHER" id="PTHR43740">
    <property type="entry name" value="LEUCYL-TRNA SYNTHETASE"/>
    <property type="match status" value="1"/>
</dbReference>
<dbReference type="Pfam" id="PF08264">
    <property type="entry name" value="Anticodon_1"/>
    <property type="match status" value="1"/>
</dbReference>
<dbReference type="Pfam" id="PF00133">
    <property type="entry name" value="tRNA-synt_1"/>
    <property type="match status" value="2"/>
</dbReference>
<dbReference type="Pfam" id="PF13603">
    <property type="entry name" value="tRNA-synt_1_2"/>
    <property type="match status" value="1"/>
</dbReference>
<dbReference type="Pfam" id="PF09334">
    <property type="entry name" value="tRNA-synt_1g"/>
    <property type="match status" value="1"/>
</dbReference>
<dbReference type="PRINTS" id="PR00985">
    <property type="entry name" value="TRNASYNTHLEU"/>
</dbReference>
<dbReference type="SUPFAM" id="SSF47323">
    <property type="entry name" value="Anticodon-binding domain of a subclass of class I aminoacyl-tRNA synthetases"/>
    <property type="match status" value="1"/>
</dbReference>
<dbReference type="SUPFAM" id="SSF52374">
    <property type="entry name" value="Nucleotidylyl transferase"/>
    <property type="match status" value="1"/>
</dbReference>
<dbReference type="SUPFAM" id="SSF50677">
    <property type="entry name" value="ValRS/IleRS/LeuRS editing domain"/>
    <property type="match status" value="1"/>
</dbReference>
<dbReference type="PROSITE" id="PS00178">
    <property type="entry name" value="AA_TRNA_LIGASE_I"/>
    <property type="match status" value="1"/>
</dbReference>
<reference key="1">
    <citation type="journal article" date="2011" name="J. Bacteriol.">
        <title>Comparative genomics of 28 Salmonella enterica isolates: evidence for CRISPR-mediated adaptive sublineage evolution.</title>
        <authorList>
            <person name="Fricke W.F."/>
            <person name="Mammel M.K."/>
            <person name="McDermott P.F."/>
            <person name="Tartera C."/>
            <person name="White D.G."/>
            <person name="Leclerc J.E."/>
            <person name="Ravel J."/>
            <person name="Cebula T.A."/>
        </authorList>
    </citation>
    <scope>NUCLEOTIDE SEQUENCE [LARGE SCALE GENOMIC DNA]</scope>
    <source>
        <strain>CVM19633</strain>
    </source>
</reference>
<accession>B4TPX5</accession>
<sequence length="860" mass="96949">MQEQYRPEEIESKVQLHWDEKRTFEVTEDESKEKYYCLSMLPYPSGRLHMGHVRNYTIGDVVARYQRMLGKNVLQPIGWDAFGLPAEGAAVKNNTAPAPWTYDNIAYMKNQLKTLGFGYDWSREIATCTPEYYRWEQKFFTELYKKGLVYKKTSAVNWCPNDQTVLANEQVIDGCCWRCDTKVERKEIPQWFIKITAYADELLRDLDKLDHWPDTVKTMQRNWIGRSEGVEITFDVKGYDNTLTVYTTRPDTFMGATYLAVAAGHPLAQKAAANNAELAAFIDECRNTKVAEAEMATMEKKGVDTGYKAIHPLTGEEIPVWAANFVLMEYGTGAVMAVPGHDQRDYEFASKYGLTIKPVILAADGSEPDLSEQALTEKGVLFNSGEFDGLAFEAAFNAIADKLAEKGVGERKVNYRLRDWGVSRQRYWGAPIPMVTLEDGTVLPTPEDQLPVILPEDVVMDGITSPIKADPEWAKTTVNGMPALRETDTFDTFMESSWYYARYTCPQYQEGMLDSKAANYWLPVDIYIGGIEHAIMHLLYFRFFHKLMRDAGMVTSDEPAKQLLCQGMVLADAFYYVGENGERNWVSPVDAIVERDEKGRIVKAKDAAGHELVYTGMSKMSKSKNNGIDPQVMVERYGADTVRLFMMFASPADMTLEWQESGVEGANRFIKRVWKLVYEHTAKGSVAALNVDALSEDQKALRRDVHKTIAKVTDDIGRRQTFNTAIAAIMELMNKLAKAPQEGEQDRALLQEALQAVVRMLNPFTPHVCFTLWQELGGEGDIDNAPWPVADEQAMVENTTLVVVQVNGKVRGKITVAVDATEEQVRERAGQEHLVAKYLDGVTVRKVIYVPGKLLNLVVG</sequence>
<evidence type="ECO:0000255" key="1">
    <source>
        <dbReference type="HAMAP-Rule" id="MF_00049"/>
    </source>
</evidence>
<organism>
    <name type="scientific">Salmonella schwarzengrund (strain CVM19633)</name>
    <dbReference type="NCBI Taxonomy" id="439843"/>
    <lineage>
        <taxon>Bacteria</taxon>
        <taxon>Pseudomonadati</taxon>
        <taxon>Pseudomonadota</taxon>
        <taxon>Gammaproteobacteria</taxon>
        <taxon>Enterobacterales</taxon>
        <taxon>Enterobacteriaceae</taxon>
        <taxon>Salmonella</taxon>
    </lineage>
</organism>